<reference key="1">
    <citation type="journal article" date="2002" name="Science">
        <title>50 million years of genomic stasis in endosymbiotic bacteria.</title>
        <authorList>
            <person name="Tamas I."/>
            <person name="Klasson L."/>
            <person name="Canbaeck B."/>
            <person name="Naeslund A.K."/>
            <person name="Eriksson A.-S."/>
            <person name="Wernegreen J.J."/>
            <person name="Sandstroem J.P."/>
            <person name="Moran N.A."/>
            <person name="Andersson S.G.E."/>
        </authorList>
    </citation>
    <scope>NUCLEOTIDE SEQUENCE [LARGE SCALE GENOMIC DNA]</scope>
    <source>
        <strain>Sg</strain>
    </source>
</reference>
<evidence type="ECO:0000255" key="1">
    <source>
        <dbReference type="HAMAP-Rule" id="MF_00418"/>
    </source>
</evidence>
<evidence type="ECO:0000305" key="2"/>
<name>DAPA_BUCAP</name>
<proteinExistence type="inferred from homology"/>
<sequence length="294" mass="32452">MFKGSIVALITPMNEEGEICHSSLKKLIDYHVLNKTKAIVSIGTTGESATLSQEEHIEVVMLTLKLANKRIPIIAGTGANATTEAISLTKRFEKSGIEACLTVTPYYNKPTQEGLYQHFKAISENTKLPQILYNVPSRTGCDLLPSTVARLSEFKNIIGIKEATGDLSRIHKIKKLVKDDFLLISGDDPTALDFIQLGGQGVISVTANIAAKEMTQMCSYALEGNFKSARSINERLMLLHESLFIEPNPIPIKWLAKKIGLIKSDTLRLPMTPILNSTRTQIEKALQYANLQKI</sequence>
<protein>
    <recommendedName>
        <fullName evidence="1">4-hydroxy-tetrahydrodipicolinate synthase</fullName>
        <shortName evidence="1">HTPA synthase</shortName>
        <ecNumber evidence="1">4.3.3.7</ecNumber>
    </recommendedName>
</protein>
<feature type="chain" id="PRO_0000103091" description="4-hydroxy-tetrahydrodipicolinate synthase">
    <location>
        <begin position="1"/>
        <end position="294"/>
    </location>
</feature>
<feature type="active site" description="Proton donor/acceptor" evidence="1">
    <location>
        <position position="133"/>
    </location>
</feature>
<feature type="active site" description="Schiff-base intermediate with substrate" evidence="1">
    <location>
        <position position="161"/>
    </location>
</feature>
<feature type="binding site" evidence="1">
    <location>
        <position position="45"/>
    </location>
    <ligand>
        <name>pyruvate</name>
        <dbReference type="ChEBI" id="CHEBI:15361"/>
    </ligand>
</feature>
<feature type="binding site" evidence="1">
    <location>
        <position position="203"/>
    </location>
    <ligand>
        <name>pyruvate</name>
        <dbReference type="ChEBI" id="CHEBI:15361"/>
    </ligand>
</feature>
<feature type="site" description="Part of a proton relay during catalysis" evidence="1">
    <location>
        <position position="44"/>
    </location>
</feature>
<feature type="site" description="Part of a proton relay during catalysis" evidence="1">
    <location>
        <position position="107"/>
    </location>
</feature>
<organism>
    <name type="scientific">Buchnera aphidicola subsp. Schizaphis graminum (strain Sg)</name>
    <dbReference type="NCBI Taxonomy" id="198804"/>
    <lineage>
        <taxon>Bacteria</taxon>
        <taxon>Pseudomonadati</taxon>
        <taxon>Pseudomonadota</taxon>
        <taxon>Gammaproteobacteria</taxon>
        <taxon>Enterobacterales</taxon>
        <taxon>Erwiniaceae</taxon>
        <taxon>Buchnera</taxon>
    </lineage>
</organism>
<accession>Q8KA24</accession>
<dbReference type="EC" id="4.3.3.7" evidence="1"/>
<dbReference type="EMBL" id="AE013218">
    <property type="protein sequence ID" value="AAM67658.1"/>
    <property type="molecule type" value="Genomic_DNA"/>
</dbReference>
<dbReference type="RefSeq" id="WP_011053624.1">
    <property type="nucleotide sequence ID" value="NC_004061.1"/>
</dbReference>
<dbReference type="SMR" id="Q8KA24"/>
<dbReference type="STRING" id="198804.BUsg_088"/>
<dbReference type="GeneID" id="93003557"/>
<dbReference type="KEGG" id="bas:BUsg_088"/>
<dbReference type="eggNOG" id="COG0329">
    <property type="taxonomic scope" value="Bacteria"/>
</dbReference>
<dbReference type="HOGENOM" id="CLU_049343_7_1_6"/>
<dbReference type="UniPathway" id="UPA00034">
    <property type="reaction ID" value="UER00017"/>
</dbReference>
<dbReference type="Proteomes" id="UP000000416">
    <property type="component" value="Chromosome"/>
</dbReference>
<dbReference type="GO" id="GO:0005829">
    <property type="term" value="C:cytosol"/>
    <property type="evidence" value="ECO:0007669"/>
    <property type="project" value="TreeGrafter"/>
</dbReference>
<dbReference type="GO" id="GO:0008840">
    <property type="term" value="F:4-hydroxy-tetrahydrodipicolinate synthase activity"/>
    <property type="evidence" value="ECO:0007669"/>
    <property type="project" value="UniProtKB-UniRule"/>
</dbReference>
<dbReference type="GO" id="GO:0019877">
    <property type="term" value="P:diaminopimelate biosynthetic process"/>
    <property type="evidence" value="ECO:0007669"/>
    <property type="project" value="UniProtKB-UniRule"/>
</dbReference>
<dbReference type="GO" id="GO:0009089">
    <property type="term" value="P:lysine biosynthetic process via diaminopimelate"/>
    <property type="evidence" value="ECO:0007669"/>
    <property type="project" value="UniProtKB-UniRule"/>
</dbReference>
<dbReference type="CDD" id="cd00950">
    <property type="entry name" value="DHDPS"/>
    <property type="match status" value="1"/>
</dbReference>
<dbReference type="FunFam" id="3.20.20.70:FF:000046">
    <property type="entry name" value="4-hydroxy-tetrahydrodipicolinate synthase"/>
    <property type="match status" value="1"/>
</dbReference>
<dbReference type="Gene3D" id="3.20.20.70">
    <property type="entry name" value="Aldolase class I"/>
    <property type="match status" value="1"/>
</dbReference>
<dbReference type="HAMAP" id="MF_00418">
    <property type="entry name" value="DapA"/>
    <property type="match status" value="1"/>
</dbReference>
<dbReference type="InterPro" id="IPR013785">
    <property type="entry name" value="Aldolase_TIM"/>
</dbReference>
<dbReference type="InterPro" id="IPR005263">
    <property type="entry name" value="DapA"/>
</dbReference>
<dbReference type="InterPro" id="IPR002220">
    <property type="entry name" value="DapA-like"/>
</dbReference>
<dbReference type="InterPro" id="IPR020625">
    <property type="entry name" value="Schiff_base-form_aldolases_AS"/>
</dbReference>
<dbReference type="InterPro" id="IPR020624">
    <property type="entry name" value="Schiff_base-form_aldolases_CS"/>
</dbReference>
<dbReference type="NCBIfam" id="TIGR00674">
    <property type="entry name" value="dapA"/>
    <property type="match status" value="1"/>
</dbReference>
<dbReference type="PANTHER" id="PTHR12128:SF66">
    <property type="entry name" value="4-HYDROXY-2-OXOGLUTARATE ALDOLASE, MITOCHONDRIAL"/>
    <property type="match status" value="1"/>
</dbReference>
<dbReference type="PANTHER" id="PTHR12128">
    <property type="entry name" value="DIHYDRODIPICOLINATE SYNTHASE"/>
    <property type="match status" value="1"/>
</dbReference>
<dbReference type="Pfam" id="PF00701">
    <property type="entry name" value="DHDPS"/>
    <property type="match status" value="1"/>
</dbReference>
<dbReference type="PIRSF" id="PIRSF001365">
    <property type="entry name" value="DHDPS"/>
    <property type="match status" value="1"/>
</dbReference>
<dbReference type="PRINTS" id="PR00146">
    <property type="entry name" value="DHPICSNTHASE"/>
</dbReference>
<dbReference type="SMART" id="SM01130">
    <property type="entry name" value="DHDPS"/>
    <property type="match status" value="1"/>
</dbReference>
<dbReference type="SUPFAM" id="SSF51569">
    <property type="entry name" value="Aldolase"/>
    <property type="match status" value="1"/>
</dbReference>
<dbReference type="PROSITE" id="PS00665">
    <property type="entry name" value="DHDPS_1"/>
    <property type="match status" value="1"/>
</dbReference>
<dbReference type="PROSITE" id="PS00666">
    <property type="entry name" value="DHDPS_2"/>
    <property type="match status" value="1"/>
</dbReference>
<keyword id="KW-0028">Amino-acid biosynthesis</keyword>
<keyword id="KW-0963">Cytoplasm</keyword>
<keyword id="KW-0220">Diaminopimelate biosynthesis</keyword>
<keyword id="KW-0456">Lyase</keyword>
<keyword id="KW-0457">Lysine biosynthesis</keyword>
<keyword id="KW-0704">Schiff base</keyword>
<gene>
    <name evidence="1" type="primary">dapA</name>
    <name type="ordered locus">BUsg_088</name>
</gene>
<comment type="function">
    <text evidence="1">Catalyzes the condensation of (S)-aspartate-beta-semialdehyde [(S)-ASA] and pyruvate to 4-hydroxy-tetrahydrodipicolinate (HTPA).</text>
</comment>
<comment type="catalytic activity">
    <reaction evidence="1">
        <text>L-aspartate 4-semialdehyde + pyruvate = (2S,4S)-4-hydroxy-2,3,4,5-tetrahydrodipicolinate + H2O + H(+)</text>
        <dbReference type="Rhea" id="RHEA:34171"/>
        <dbReference type="ChEBI" id="CHEBI:15361"/>
        <dbReference type="ChEBI" id="CHEBI:15377"/>
        <dbReference type="ChEBI" id="CHEBI:15378"/>
        <dbReference type="ChEBI" id="CHEBI:67139"/>
        <dbReference type="ChEBI" id="CHEBI:537519"/>
        <dbReference type="EC" id="4.3.3.7"/>
    </reaction>
</comment>
<comment type="pathway">
    <text evidence="1">Amino-acid biosynthesis; L-lysine biosynthesis via DAP pathway; (S)-tetrahydrodipicolinate from L-aspartate: step 3/4.</text>
</comment>
<comment type="subunit">
    <text evidence="1">Homotetramer; dimer of dimers.</text>
</comment>
<comment type="subcellular location">
    <subcellularLocation>
        <location evidence="1">Cytoplasm</location>
    </subcellularLocation>
</comment>
<comment type="similarity">
    <text evidence="1">Belongs to the DapA family.</text>
</comment>
<comment type="caution">
    <text evidence="2">Was originally thought to be a dihydrodipicolinate synthase (DHDPS), catalyzing the condensation of (S)-aspartate-beta-semialdehyde [(S)-ASA] and pyruvate to dihydrodipicolinate (DHDP). However, it was shown in E.coli that the product of the enzymatic reaction is not dihydrodipicolinate but in fact (4S)-4-hydroxy-2,3,4,5-tetrahydro-(2S)-dipicolinic acid (HTPA), and that the consecutive dehydration reaction leading to DHDP is not spontaneous but catalyzed by DapB.</text>
</comment>